<reference key="1">
    <citation type="journal article" date="2008" name="DNA Res.">
        <title>Comparative genome analysis of Lactobacillus reuteri and Lactobacillus fermentum reveal a genomic island for reuterin and cobalamin production.</title>
        <authorList>
            <person name="Morita H."/>
            <person name="Toh H."/>
            <person name="Fukuda S."/>
            <person name="Horikawa H."/>
            <person name="Oshima K."/>
            <person name="Suzuki T."/>
            <person name="Murakami M."/>
            <person name="Hisamatsu S."/>
            <person name="Kato Y."/>
            <person name="Takizawa T."/>
            <person name="Fukuoka H."/>
            <person name="Yoshimura T."/>
            <person name="Itoh K."/>
            <person name="O'Sullivan D.J."/>
            <person name="McKay L.L."/>
            <person name="Ohno H."/>
            <person name="Kikuchi J."/>
            <person name="Masaoka T."/>
            <person name="Hattori M."/>
        </authorList>
    </citation>
    <scope>NUCLEOTIDE SEQUENCE [LARGE SCALE GENOMIC DNA]</scope>
    <source>
        <strain>JCM 1112</strain>
    </source>
</reference>
<dbReference type="EC" id="5.4.99.62" evidence="1"/>
<dbReference type="EMBL" id="AP007281">
    <property type="protein sequence ID" value="BAG24916.1"/>
    <property type="molecule type" value="Genomic_DNA"/>
</dbReference>
<dbReference type="RefSeq" id="WP_003667492.1">
    <property type="nucleotide sequence ID" value="NC_010609.1"/>
</dbReference>
<dbReference type="SMR" id="B2G634"/>
<dbReference type="KEGG" id="lrf:LAR_0400"/>
<dbReference type="HOGENOM" id="CLU_135498_0_0_9"/>
<dbReference type="UniPathway" id="UPA00916">
    <property type="reaction ID" value="UER00888"/>
</dbReference>
<dbReference type="GO" id="GO:0005829">
    <property type="term" value="C:cytosol"/>
    <property type="evidence" value="ECO:0007669"/>
    <property type="project" value="TreeGrafter"/>
</dbReference>
<dbReference type="GO" id="GO:0062193">
    <property type="term" value="F:D-ribose pyranase activity"/>
    <property type="evidence" value="ECO:0007669"/>
    <property type="project" value="UniProtKB-EC"/>
</dbReference>
<dbReference type="GO" id="GO:0016872">
    <property type="term" value="F:intramolecular lyase activity"/>
    <property type="evidence" value="ECO:0007669"/>
    <property type="project" value="UniProtKB-UniRule"/>
</dbReference>
<dbReference type="GO" id="GO:0048029">
    <property type="term" value="F:monosaccharide binding"/>
    <property type="evidence" value="ECO:0007669"/>
    <property type="project" value="InterPro"/>
</dbReference>
<dbReference type="GO" id="GO:0019303">
    <property type="term" value="P:D-ribose catabolic process"/>
    <property type="evidence" value="ECO:0007669"/>
    <property type="project" value="UniProtKB-UniRule"/>
</dbReference>
<dbReference type="FunFam" id="3.40.1650.10:FF:000004">
    <property type="entry name" value="D-ribose pyranase"/>
    <property type="match status" value="1"/>
</dbReference>
<dbReference type="Gene3D" id="3.40.1650.10">
    <property type="entry name" value="RbsD-like domain"/>
    <property type="match status" value="1"/>
</dbReference>
<dbReference type="HAMAP" id="MF_01661">
    <property type="entry name" value="D_rib_pyranase"/>
    <property type="match status" value="1"/>
</dbReference>
<dbReference type="InterPro" id="IPR023064">
    <property type="entry name" value="D-ribose_pyranase"/>
</dbReference>
<dbReference type="InterPro" id="IPR023750">
    <property type="entry name" value="RbsD-like_sf"/>
</dbReference>
<dbReference type="InterPro" id="IPR007721">
    <property type="entry name" value="RbsD_FucU"/>
</dbReference>
<dbReference type="NCBIfam" id="NF008761">
    <property type="entry name" value="PRK11797.1"/>
    <property type="match status" value="1"/>
</dbReference>
<dbReference type="PANTHER" id="PTHR37831">
    <property type="entry name" value="D-RIBOSE PYRANASE"/>
    <property type="match status" value="1"/>
</dbReference>
<dbReference type="PANTHER" id="PTHR37831:SF1">
    <property type="entry name" value="D-RIBOSE PYRANASE"/>
    <property type="match status" value="1"/>
</dbReference>
<dbReference type="Pfam" id="PF05025">
    <property type="entry name" value="RbsD_FucU"/>
    <property type="match status" value="1"/>
</dbReference>
<dbReference type="SUPFAM" id="SSF102546">
    <property type="entry name" value="RbsD-like"/>
    <property type="match status" value="1"/>
</dbReference>
<sequence>MKKTGIINSEVSAVVANMGHMDWLSIGDAGMPVPFGTKKIDLAVDKELPSFMDVLNNVLKEMKVQKIYLAEEIKDQNPAQLENIKKALPDVEVAFMPHSELKKSLTKTHAFIRTGEMTPYSNIILESGVTF</sequence>
<comment type="function">
    <text evidence="1">Catalyzes the interconversion of beta-pyran and beta-furan forms of D-ribose.</text>
</comment>
<comment type="catalytic activity">
    <reaction evidence="1">
        <text>beta-D-ribopyranose = beta-D-ribofuranose</text>
        <dbReference type="Rhea" id="RHEA:25432"/>
        <dbReference type="ChEBI" id="CHEBI:27476"/>
        <dbReference type="ChEBI" id="CHEBI:47002"/>
        <dbReference type="EC" id="5.4.99.62"/>
    </reaction>
</comment>
<comment type="pathway">
    <text evidence="1">Carbohydrate metabolism; D-ribose degradation; D-ribose 5-phosphate from beta-D-ribopyranose: step 1/2.</text>
</comment>
<comment type="subunit">
    <text evidence="1">Homodecamer.</text>
</comment>
<comment type="subcellular location">
    <subcellularLocation>
        <location evidence="1">Cytoplasm</location>
    </subcellularLocation>
</comment>
<comment type="similarity">
    <text evidence="1">Belongs to the RbsD / FucU family. RbsD subfamily.</text>
</comment>
<evidence type="ECO:0000255" key="1">
    <source>
        <dbReference type="HAMAP-Rule" id="MF_01661"/>
    </source>
</evidence>
<protein>
    <recommendedName>
        <fullName evidence="1">D-ribose pyranase</fullName>
        <ecNumber evidence="1">5.4.99.62</ecNumber>
    </recommendedName>
</protein>
<organism>
    <name type="scientific">Limosilactobacillus reuteri subsp. reuteri (strain JCM 1112)</name>
    <name type="common">Lactobacillus reuteri</name>
    <dbReference type="NCBI Taxonomy" id="557433"/>
    <lineage>
        <taxon>Bacteria</taxon>
        <taxon>Bacillati</taxon>
        <taxon>Bacillota</taxon>
        <taxon>Bacilli</taxon>
        <taxon>Lactobacillales</taxon>
        <taxon>Lactobacillaceae</taxon>
        <taxon>Limosilactobacillus</taxon>
    </lineage>
</organism>
<accession>B2G634</accession>
<name>RBSD_LIMRJ</name>
<proteinExistence type="inferred from homology"/>
<feature type="chain" id="PRO_1000187155" description="D-ribose pyranase">
    <location>
        <begin position="1"/>
        <end position="131"/>
    </location>
</feature>
<feature type="active site" description="Proton donor" evidence="1">
    <location>
        <position position="20"/>
    </location>
</feature>
<feature type="binding site" evidence="1">
    <location>
        <position position="28"/>
    </location>
    <ligand>
        <name>substrate</name>
    </ligand>
</feature>
<feature type="binding site" evidence="1">
    <location>
        <position position="98"/>
    </location>
    <ligand>
        <name>substrate</name>
    </ligand>
</feature>
<feature type="binding site" evidence="1">
    <location>
        <begin position="120"/>
        <end position="122"/>
    </location>
    <ligand>
        <name>substrate</name>
    </ligand>
</feature>
<gene>
    <name evidence="1" type="primary">rbsD</name>
    <name type="ordered locus">LAR_0400</name>
</gene>
<keyword id="KW-0119">Carbohydrate metabolism</keyword>
<keyword id="KW-0963">Cytoplasm</keyword>
<keyword id="KW-0413">Isomerase</keyword>